<accession>Q8WN95</accession>
<comment type="function">
    <text evidence="2">Inositol 1,4,5-trisphosphate-gated calcium channel that, upon 1D-myo-inositol 1,4,5-trisphosphate binding, transports calcium from the endoplasmic reticulum lumen to cytoplasm, thus releasing the intracellular calcium and therefore participates in cellular calcium ion homeostasis. 1D-myo-inositol 1,4,5-trisphosphate binds to the ligand-free channel without altering its global conformation, yielding the low-energy resting state, then progresses through resting-to preactivated transitions to the higher energy preactivated state, which increases affinity for calcium, promoting binding of the low basal cytosolic calcium at the juxtamembrane domain (JD) site, favoring the transition through the ensemble of high-energy intermediate states along the trajectory to the fully-open activated state. Upon opening, releases calcium in the cytosol where it can bind to the low-affinity cytoplasmic domain (CD) site and stabilizes the inhibited state to terminate calcium release.</text>
</comment>
<comment type="catalytic activity">
    <reaction evidence="2">
        <text>Ca(2+)(in) = Ca(2+)(out)</text>
        <dbReference type="Rhea" id="RHEA:29671"/>
        <dbReference type="ChEBI" id="CHEBI:29108"/>
    </reaction>
</comment>
<comment type="activity regulation">
    <text evidence="2">Inositol 1,4,5-trisphosphate-gated calcium channel is regulated by cytosolic calcium in a biphasic manner. At low concentrations, cytosolic calcium binds at a high-affinity juxtamembrane domain (JD) calcium binding site, allowing ITPR3 to activate by escaping a low-energy resting state through an ensemble of preactivated states. At high cytosolic calcium concentrations, ITPR3 preferentially enters an inhibited state stabilized by calcium binding at a second, low-affinity cytoplasmic domain (CD) calcium binding site.</text>
</comment>
<comment type="subunit">
    <text evidence="1 2 3 7">Homotetramer (By similarity). Homodimer (By similarity). Interacts with TRPC1, TRPC3 and TRPC4. Interacts with TRPV4 (By similarity). Interacts with SIGMAR1 (By similarity). Interacts with PML and AKT1 (By similarity). Interacts with IRAG2 (via coiled-coil domain) (By similarity). Interacts with CABP1. Interacts with TMBIM4/LFG4. Interacts with CEMIP (By similarity). Interacts with TESPA1 (By similarity). Interacts with TMEM203 (By similarity). Interacts with BOK; regulates ITPR3 expression (By similarity). Interacts with BCL2L10 (By similarity). Interacts with CHGA and CHGB (PubMed:11584008).</text>
</comment>
<comment type="subcellular location">
    <subcellularLocation>
        <location evidence="7">Endoplasmic reticulum membrane</location>
        <topology evidence="4">Multi-pass membrane protein</topology>
    </subcellularLocation>
    <subcellularLocation>
        <location evidence="7">Cytoplasmic vesicle</location>
        <location evidence="7">Secretory vesicle membrane</location>
        <topology evidence="4">Multi-pass membrane protein</topology>
    </subcellularLocation>
    <text evidence="1">Also localizes at mitochondria-associated membranes (MAMs).</text>
</comment>
<comment type="domain">
    <text evidence="2">Composed of a large N-terminal cytoplasmic domain (CD) followed by a juxtamembrane domain (JD) and a transmembrane domain (TMD).</text>
</comment>
<comment type="PTM">
    <text evidence="1">Phosphorylated by AKT1 on serine and/or threonine residues (By similarity).</text>
</comment>
<comment type="similarity">
    <text evidence="8">Belongs to the InsP3 receptor family.</text>
</comment>
<reference key="1">
    <citation type="journal article" date="2001" name="J. Biol. Chem.">
        <title>Localization of three types of the inositol 1,4,5-trisphosphate receptor/Ca2+ channel in the secretory granules and coupling with the Ca2+ storage proteins chromogranins A and B.</title>
        <authorList>
            <person name="Yoo S.H."/>
            <person name="Oh Y.S."/>
            <person name="Kang M.K."/>
            <person name="Huh Y.H."/>
            <person name="So S.H."/>
            <person name="Park H.S."/>
            <person name="Park H.Y."/>
        </authorList>
    </citation>
    <scope>NUCLEOTIDE SEQUENCE [MRNA]</scope>
    <scope>SUBCELLULAR LOCATION</scope>
    <scope>INTERACTION WITH CHGA AND CHGB</scope>
    <source>
        <tissue>Adrenal medulla</tissue>
    </source>
</reference>
<protein>
    <recommendedName>
        <fullName evidence="2">Inositol 1,4,5-trisphosphate-gated calcium channel ITPR3</fullName>
    </recommendedName>
    <alternativeName>
        <fullName>IP3 receptor isoform 3</fullName>
        <shortName evidence="3">IP3R-3</shortName>
        <shortName>InsP3R3</shortName>
    </alternativeName>
    <alternativeName>
        <fullName>Inositol 1,4,5-trisphosphate receptor type 3</fullName>
    </alternativeName>
    <alternativeName>
        <fullName>Type 3 inositol 1,4,5-trisphosphate receptor</fullName>
        <shortName>Type 3 InsP3 receptor</shortName>
    </alternativeName>
</protein>
<evidence type="ECO:0000250" key="1">
    <source>
        <dbReference type="UniProtKB" id="P70227"/>
    </source>
</evidence>
<evidence type="ECO:0000250" key="2">
    <source>
        <dbReference type="UniProtKB" id="Q14573"/>
    </source>
</evidence>
<evidence type="ECO:0000250" key="3">
    <source>
        <dbReference type="UniProtKB" id="Q63269"/>
    </source>
</evidence>
<evidence type="ECO:0000255" key="4"/>
<evidence type="ECO:0000255" key="5">
    <source>
        <dbReference type="PROSITE-ProRule" id="PRU00131"/>
    </source>
</evidence>
<evidence type="ECO:0000256" key="6">
    <source>
        <dbReference type="SAM" id="MobiDB-lite"/>
    </source>
</evidence>
<evidence type="ECO:0000269" key="7">
    <source>
    </source>
</evidence>
<evidence type="ECO:0000305" key="8"/>
<feature type="chain" id="PRO_0000153927" description="Inositol 1,4,5-trisphosphate-gated calcium channel ITPR3">
    <location>
        <begin position="1"/>
        <end position="2664"/>
    </location>
</feature>
<feature type="topological domain" description="Cytoplasmic" evidence="4">
    <location>
        <begin position="1"/>
        <end position="2227"/>
    </location>
</feature>
<feature type="transmembrane region" description="Helical" evidence="4">
    <location>
        <begin position="2228"/>
        <end position="2248"/>
    </location>
</feature>
<feature type="topological domain" description="Extracellular" evidence="4">
    <location>
        <begin position="2249"/>
        <end position="2256"/>
    </location>
</feature>
<feature type="transmembrane region" description="Helical" evidence="4">
    <location>
        <begin position="2257"/>
        <end position="2277"/>
    </location>
</feature>
<feature type="topological domain" description="Cytoplasmic" evidence="4">
    <location>
        <begin position="2278"/>
        <end position="2286"/>
    </location>
</feature>
<feature type="transmembrane region" description="Helical" evidence="4">
    <location>
        <begin position="2287"/>
        <end position="2304"/>
    </location>
</feature>
<feature type="topological domain" description="Extracellular" evidence="4">
    <location>
        <begin position="2305"/>
        <end position="2318"/>
    </location>
</feature>
<feature type="transmembrane region" description="Helical" evidence="4">
    <location>
        <begin position="2319"/>
        <end position="2339"/>
    </location>
</feature>
<feature type="topological domain" description="Cytoplasmic" evidence="4">
    <location>
        <begin position="2340"/>
        <end position="2361"/>
    </location>
</feature>
<feature type="transmembrane region" description="Helical" evidence="4">
    <location>
        <begin position="2362"/>
        <end position="2382"/>
    </location>
</feature>
<feature type="topological domain" description="Extracellular" evidence="4">
    <location>
        <begin position="2383"/>
        <end position="2489"/>
    </location>
</feature>
<feature type="transmembrane region" description="Helical" evidence="4">
    <location>
        <begin position="2490"/>
        <end position="2510"/>
    </location>
</feature>
<feature type="topological domain" description="Cytoplasmic" evidence="4">
    <location>
        <begin position="2511"/>
        <end position="2664"/>
    </location>
</feature>
<feature type="domain" description="MIR 1" evidence="5">
    <location>
        <begin position="113"/>
        <end position="173"/>
    </location>
</feature>
<feature type="domain" description="MIR 2" evidence="5">
    <location>
        <begin position="174"/>
        <end position="224"/>
    </location>
</feature>
<feature type="domain" description="MIR 3" evidence="5">
    <location>
        <begin position="232"/>
        <end position="288"/>
    </location>
</feature>
<feature type="domain" description="MIR 4" evidence="5">
    <location>
        <begin position="295"/>
        <end position="372"/>
    </location>
</feature>
<feature type="domain" description="MIR 5" evidence="5">
    <location>
        <begin position="378"/>
        <end position="434"/>
    </location>
</feature>
<feature type="region of interest" description="Disordered" evidence="6">
    <location>
        <begin position="320"/>
        <end position="344"/>
    </location>
</feature>
<feature type="region of interest" description="Disordered" evidence="6">
    <location>
        <begin position="1124"/>
        <end position="1158"/>
    </location>
</feature>
<feature type="region of interest" description="Disordered" evidence="6">
    <location>
        <begin position="1790"/>
        <end position="1850"/>
    </location>
</feature>
<feature type="compositionally biased region" description="Polar residues" evidence="6">
    <location>
        <begin position="1792"/>
        <end position="1805"/>
    </location>
</feature>
<feature type="binding site" evidence="2">
    <location>
        <position position="266"/>
    </location>
    <ligand>
        <name>1D-myo-inositol 1,4,5-trisphosphate</name>
        <dbReference type="ChEBI" id="CHEBI:203600"/>
    </ligand>
</feature>
<feature type="binding site" evidence="2">
    <location>
        <position position="268"/>
    </location>
    <ligand>
        <name>1D-myo-inositol 1,4,5-trisphosphate</name>
        <dbReference type="ChEBI" id="CHEBI:203600"/>
    </ligand>
</feature>
<feature type="binding site" evidence="2">
    <location>
        <position position="269"/>
    </location>
    <ligand>
        <name>1D-myo-inositol 1,4,5-trisphosphate</name>
        <dbReference type="ChEBI" id="CHEBI:203600"/>
    </ligand>
</feature>
<feature type="binding site" evidence="2">
    <location>
        <position position="270"/>
    </location>
    <ligand>
        <name>1D-myo-inositol 1,4,5-trisphosphate</name>
        <dbReference type="ChEBI" id="CHEBI:203600"/>
    </ligand>
</feature>
<feature type="binding site" evidence="2">
    <location>
        <position position="503"/>
    </location>
    <ligand>
        <name>1D-myo-inositol 1,4,5-trisphosphate</name>
        <dbReference type="ChEBI" id="CHEBI:203600"/>
    </ligand>
</feature>
<feature type="binding site" evidence="2">
    <location>
        <position position="507"/>
    </location>
    <ligand>
        <name>1D-myo-inositol 1,4,5-trisphosphate</name>
        <dbReference type="ChEBI" id="CHEBI:203600"/>
    </ligand>
</feature>
<feature type="binding site" evidence="2">
    <location>
        <position position="510"/>
    </location>
    <ligand>
        <name>1D-myo-inositol 1,4,5-trisphosphate</name>
        <dbReference type="ChEBI" id="CHEBI:203600"/>
    </ligand>
</feature>
<feature type="binding site" evidence="2">
    <location>
        <position position="567"/>
    </location>
    <ligand>
        <name>1D-myo-inositol 1,4,5-trisphosphate</name>
        <dbReference type="ChEBI" id="CHEBI:203600"/>
    </ligand>
</feature>
<feature type="binding site" evidence="2">
    <location>
        <position position="568"/>
    </location>
    <ligand>
        <name>1D-myo-inositol 1,4,5-trisphosphate</name>
        <dbReference type="ChEBI" id="CHEBI:203600"/>
    </ligand>
</feature>
<feature type="binding site" evidence="2">
    <location>
        <position position="569"/>
    </location>
    <ligand>
        <name>1D-myo-inositol 1,4,5-trisphosphate</name>
        <dbReference type="ChEBI" id="CHEBI:203600"/>
    </ligand>
</feature>
<feature type="binding site" evidence="2">
    <location>
        <position position="743"/>
    </location>
    <ligand>
        <name>Ca(2+)</name>
        <dbReference type="ChEBI" id="CHEBI:29108"/>
        <label>1</label>
        <note>low affinity</note>
    </ligand>
</feature>
<feature type="binding site" evidence="2">
    <location>
        <position position="1115"/>
    </location>
    <ligand>
        <name>Ca(2+)</name>
        <dbReference type="ChEBI" id="CHEBI:29108"/>
        <label>1</label>
        <note>low affinity</note>
    </ligand>
</feature>
<feature type="binding site" evidence="2">
    <location>
        <position position="1118"/>
    </location>
    <ligand>
        <name>Ca(2+)</name>
        <dbReference type="ChEBI" id="CHEBI:29108"/>
        <label>1</label>
        <note>low affinity</note>
    </ligand>
</feature>
<feature type="binding site" evidence="2">
    <location>
        <position position="1875"/>
    </location>
    <ligand>
        <name>Ca(2+)</name>
        <dbReference type="ChEBI" id="CHEBI:29108"/>
        <label>2</label>
        <note>high affinity</note>
    </ligand>
</feature>
<feature type="binding site" evidence="2">
    <location>
        <position position="1939"/>
    </location>
    <ligand>
        <name>Ca(2+)</name>
        <dbReference type="ChEBI" id="CHEBI:29108"/>
        <label>2</label>
        <note>high affinity</note>
    </ligand>
</feature>
<feature type="binding site" evidence="2">
    <location>
        <position position="1989"/>
    </location>
    <ligand>
        <name>ATP</name>
        <dbReference type="ChEBI" id="CHEBI:30616"/>
    </ligand>
</feature>
<feature type="binding site" evidence="2">
    <location>
        <position position="2142"/>
    </location>
    <ligand>
        <name>ATP</name>
        <dbReference type="ChEBI" id="CHEBI:30616"/>
    </ligand>
</feature>
<feature type="binding site" evidence="2">
    <location>
        <position position="2145"/>
    </location>
    <ligand>
        <name>ATP</name>
        <dbReference type="ChEBI" id="CHEBI:30616"/>
    </ligand>
</feature>
<feature type="binding site" evidence="2">
    <location>
        <position position="2531"/>
    </location>
    <ligand>
        <name>ATP</name>
        <dbReference type="ChEBI" id="CHEBI:30616"/>
    </ligand>
</feature>
<feature type="binding site" evidence="2">
    <location>
        <position position="2531"/>
    </location>
    <ligand>
        <name>Zn(2+)</name>
        <dbReference type="ChEBI" id="CHEBI:29105"/>
    </ligand>
</feature>
<feature type="binding site" evidence="2">
    <location>
        <position position="2532"/>
    </location>
    <ligand>
        <name>ATP</name>
        <dbReference type="ChEBI" id="CHEBI:30616"/>
    </ligand>
</feature>
<feature type="binding site" evidence="2">
    <location>
        <position position="2534"/>
    </location>
    <ligand>
        <name>Zn(2+)</name>
        <dbReference type="ChEBI" id="CHEBI:29105"/>
    </ligand>
</feature>
<feature type="binding site" evidence="2">
    <location>
        <position position="2551"/>
    </location>
    <ligand>
        <name>Zn(2+)</name>
        <dbReference type="ChEBI" id="CHEBI:29105"/>
    </ligand>
</feature>
<feature type="binding site" evidence="2">
    <location>
        <position position="2553"/>
    </location>
    <ligand>
        <name>ATP</name>
        <dbReference type="ChEBI" id="CHEBI:30616"/>
    </ligand>
</feature>
<feature type="binding site" evidence="2">
    <location>
        <position position="2556"/>
    </location>
    <ligand>
        <name>ATP</name>
        <dbReference type="ChEBI" id="CHEBI:30616"/>
    </ligand>
</feature>
<feature type="binding site" evidence="2">
    <location>
        <position position="2556"/>
    </location>
    <ligand>
        <name>Zn(2+)</name>
        <dbReference type="ChEBI" id="CHEBI:29105"/>
    </ligand>
</feature>
<feature type="binding site" evidence="2">
    <location>
        <position position="2557"/>
    </location>
    <ligand>
        <name>ATP</name>
        <dbReference type="ChEBI" id="CHEBI:30616"/>
    </ligand>
</feature>
<feature type="binding site" evidence="2">
    <location>
        <position position="2558"/>
    </location>
    <ligand>
        <name>ATP</name>
        <dbReference type="ChEBI" id="CHEBI:30616"/>
    </ligand>
</feature>
<feature type="binding site" evidence="2">
    <location>
        <position position="2574"/>
    </location>
    <ligand>
        <name>Ca(2+)</name>
        <dbReference type="ChEBI" id="CHEBI:29108"/>
        <label>2</label>
        <note>high affinity</note>
    </ligand>
</feature>
<feature type="modified residue" description="Phosphoserine" evidence="2">
    <location>
        <position position="909"/>
    </location>
</feature>
<feature type="modified residue" description="Phosphoserine" evidence="2">
    <location>
        <position position="927"/>
    </location>
</feature>
<feature type="modified residue" description="Phosphoserine" evidence="2">
    <location>
        <position position="1806"/>
    </location>
</feature>
<feature type="modified residue" description="Phosphoserine" evidence="2">
    <location>
        <position position="1825"/>
    </location>
</feature>
<feature type="modified residue" description="Phosphoserine" evidence="2">
    <location>
        <position position="1827"/>
    </location>
</feature>
<feature type="modified residue" description="Phosphoserine" evidence="2">
    <location>
        <position position="2602"/>
    </location>
</feature>
<feature type="modified residue" description="Phosphoserine" evidence="2">
    <location>
        <position position="2663"/>
    </location>
</feature>
<feature type="disulfide bond" evidence="2">
    <location>
        <begin position="2448"/>
        <end position="2454"/>
    </location>
</feature>
<dbReference type="EMBL" id="AF402601">
    <property type="protein sequence ID" value="AAL39078.1"/>
    <property type="molecule type" value="mRNA"/>
</dbReference>
<dbReference type="RefSeq" id="NP_776795.1">
    <property type="nucleotide sequence ID" value="NM_174370.3"/>
</dbReference>
<dbReference type="SMR" id="Q8WN95"/>
<dbReference type="FunCoup" id="Q8WN95">
    <property type="interactions" value="915"/>
</dbReference>
<dbReference type="STRING" id="9913.ENSBTAP00000047648"/>
<dbReference type="BindingDB" id="Q8WN95"/>
<dbReference type="ChEMBL" id="CHEMBL2853"/>
<dbReference type="PaxDb" id="9913-ENSBTAP00000047648"/>
<dbReference type="PeptideAtlas" id="Q8WN95"/>
<dbReference type="GeneID" id="281879"/>
<dbReference type="KEGG" id="bta:281879"/>
<dbReference type="CTD" id="3710"/>
<dbReference type="eggNOG" id="KOG3533">
    <property type="taxonomic scope" value="Eukaryota"/>
</dbReference>
<dbReference type="InParanoid" id="Q8WN95"/>
<dbReference type="OrthoDB" id="76898at2759"/>
<dbReference type="Proteomes" id="UP000009136">
    <property type="component" value="Unplaced"/>
</dbReference>
<dbReference type="GO" id="GO:0098554">
    <property type="term" value="C:cytoplasmic side of endoplasmic reticulum membrane"/>
    <property type="evidence" value="ECO:0000250"/>
    <property type="project" value="UniProtKB"/>
</dbReference>
<dbReference type="GO" id="GO:0005789">
    <property type="term" value="C:endoplasmic reticulum membrane"/>
    <property type="evidence" value="ECO:0000318"/>
    <property type="project" value="GO_Central"/>
</dbReference>
<dbReference type="GO" id="GO:0005886">
    <property type="term" value="C:plasma membrane"/>
    <property type="evidence" value="ECO:0000318"/>
    <property type="project" value="GO_Central"/>
</dbReference>
<dbReference type="GO" id="GO:0005791">
    <property type="term" value="C:rough endoplasmic reticulum"/>
    <property type="evidence" value="ECO:0000314"/>
    <property type="project" value="CACAO"/>
</dbReference>
<dbReference type="GO" id="GO:0016529">
    <property type="term" value="C:sarcoplasmic reticulum"/>
    <property type="evidence" value="ECO:0000318"/>
    <property type="project" value="GO_Central"/>
</dbReference>
<dbReference type="GO" id="GO:0030141">
    <property type="term" value="C:secretory granule"/>
    <property type="evidence" value="ECO:0000314"/>
    <property type="project" value="CACAO"/>
</dbReference>
<dbReference type="GO" id="GO:0030667">
    <property type="term" value="C:secretory granule membrane"/>
    <property type="evidence" value="ECO:0000318"/>
    <property type="project" value="GO_Central"/>
</dbReference>
<dbReference type="GO" id="GO:0030658">
    <property type="term" value="C:transport vesicle membrane"/>
    <property type="evidence" value="ECO:0007669"/>
    <property type="project" value="UniProtKB-SubCell"/>
</dbReference>
<dbReference type="GO" id="GO:0005524">
    <property type="term" value="F:ATP binding"/>
    <property type="evidence" value="ECO:0000250"/>
    <property type="project" value="UniProtKB"/>
</dbReference>
<dbReference type="GO" id="GO:0005509">
    <property type="term" value="F:calcium ion binding"/>
    <property type="evidence" value="ECO:0000250"/>
    <property type="project" value="UniProtKB"/>
</dbReference>
<dbReference type="GO" id="GO:0070679">
    <property type="term" value="F:inositol 1,4,5 trisphosphate binding"/>
    <property type="evidence" value="ECO:0000318"/>
    <property type="project" value="GO_Central"/>
</dbReference>
<dbReference type="GO" id="GO:0005220">
    <property type="term" value="F:inositol 1,4,5-trisphosphate-gated calcium channel activity"/>
    <property type="evidence" value="ECO:0000250"/>
    <property type="project" value="UniProtKB"/>
</dbReference>
<dbReference type="GO" id="GO:0015278">
    <property type="term" value="F:intracellularly gated calcium channel activity"/>
    <property type="evidence" value="ECO:0000250"/>
    <property type="project" value="UniProtKB"/>
</dbReference>
<dbReference type="GO" id="GO:0035091">
    <property type="term" value="F:phosphatidylinositol binding"/>
    <property type="evidence" value="ECO:0000318"/>
    <property type="project" value="GO_Central"/>
</dbReference>
<dbReference type="GO" id="GO:0008270">
    <property type="term" value="F:zinc ion binding"/>
    <property type="evidence" value="ECO:0000250"/>
    <property type="project" value="UniProtKB"/>
</dbReference>
<dbReference type="GO" id="GO:0055074">
    <property type="term" value="P:calcium ion homeostasis"/>
    <property type="evidence" value="ECO:0000250"/>
    <property type="project" value="UniProtKB"/>
</dbReference>
<dbReference type="GO" id="GO:0006816">
    <property type="term" value="P:calcium ion transport"/>
    <property type="evidence" value="ECO:0000250"/>
    <property type="project" value="AgBase"/>
</dbReference>
<dbReference type="GO" id="GO:0051289">
    <property type="term" value="P:protein homotetramerization"/>
    <property type="evidence" value="ECO:0000250"/>
    <property type="project" value="UniProtKB"/>
</dbReference>
<dbReference type="GO" id="GO:0051209">
    <property type="term" value="P:release of sequestered calcium ion into cytosol"/>
    <property type="evidence" value="ECO:0000318"/>
    <property type="project" value="GO_Central"/>
</dbReference>
<dbReference type="CDD" id="cd23289">
    <property type="entry name" value="beta-trefoil_MIR_ITPR3"/>
    <property type="match status" value="1"/>
</dbReference>
<dbReference type="FunFam" id="2.80.10.50:FF:000002">
    <property type="entry name" value="Inositol 1,4,5-trisphosphate receptor type 2"/>
    <property type="match status" value="1"/>
</dbReference>
<dbReference type="FunFam" id="2.80.10.50:FF:000028">
    <property type="entry name" value="Inositol 1,4,5-trisphosphate receptor type 3"/>
    <property type="match status" value="1"/>
</dbReference>
<dbReference type="FunFam" id="1.25.10.30:FF:000001">
    <property type="entry name" value="Inositol 1,4,5-trisphosphate receptor, type 2"/>
    <property type="match status" value="1"/>
</dbReference>
<dbReference type="Gene3D" id="1.10.287.70">
    <property type="match status" value="1"/>
</dbReference>
<dbReference type="Gene3D" id="2.80.10.50">
    <property type="match status" value="2"/>
</dbReference>
<dbReference type="Gene3D" id="1.25.10.30">
    <property type="entry name" value="IP3 receptor type 1 binding core, RIH domain"/>
    <property type="match status" value="1"/>
</dbReference>
<dbReference type="InterPro" id="IPR014821">
    <property type="entry name" value="Ins145_P3_rcpt"/>
</dbReference>
<dbReference type="InterPro" id="IPR000493">
    <property type="entry name" value="InsP3_rcpt"/>
</dbReference>
<dbReference type="InterPro" id="IPR005821">
    <property type="entry name" value="Ion_trans_dom"/>
</dbReference>
<dbReference type="InterPro" id="IPR036300">
    <property type="entry name" value="MIR_dom_sf"/>
</dbReference>
<dbReference type="InterPro" id="IPR016093">
    <property type="entry name" value="MIR_motif"/>
</dbReference>
<dbReference type="InterPro" id="IPR013662">
    <property type="entry name" value="RIH_assoc-dom"/>
</dbReference>
<dbReference type="InterPro" id="IPR000699">
    <property type="entry name" value="RIH_dom"/>
</dbReference>
<dbReference type="InterPro" id="IPR015925">
    <property type="entry name" value="Ryanodine_IP3_receptor"/>
</dbReference>
<dbReference type="InterPro" id="IPR035910">
    <property type="entry name" value="RyR/IP3R_RIH_dom_sf"/>
</dbReference>
<dbReference type="PANTHER" id="PTHR45816:SF1">
    <property type="entry name" value="INOSITOL 1,4,5-TRISPHOSPHATE RECEPTOR"/>
    <property type="match status" value="1"/>
</dbReference>
<dbReference type="PANTHER" id="PTHR45816">
    <property type="entry name" value="MIR DOMAIN-CONTAINING PROTEIN"/>
    <property type="match status" value="1"/>
</dbReference>
<dbReference type="Pfam" id="PF08709">
    <property type="entry name" value="Ins145_P3_rec"/>
    <property type="match status" value="1"/>
</dbReference>
<dbReference type="Pfam" id="PF00520">
    <property type="entry name" value="Ion_trans"/>
    <property type="match status" value="1"/>
</dbReference>
<dbReference type="Pfam" id="PF02815">
    <property type="entry name" value="MIR"/>
    <property type="match status" value="1"/>
</dbReference>
<dbReference type="Pfam" id="PF08454">
    <property type="entry name" value="RIH_assoc"/>
    <property type="match status" value="1"/>
</dbReference>
<dbReference type="Pfam" id="PF01365">
    <property type="entry name" value="RYDR_ITPR"/>
    <property type="match status" value="2"/>
</dbReference>
<dbReference type="PRINTS" id="PR00779">
    <property type="entry name" value="INSP3RECEPTR"/>
</dbReference>
<dbReference type="SMART" id="SM00472">
    <property type="entry name" value="MIR"/>
    <property type="match status" value="4"/>
</dbReference>
<dbReference type="SUPFAM" id="SSF100909">
    <property type="entry name" value="IP3 receptor type 1 binding core, domain 2"/>
    <property type="match status" value="2"/>
</dbReference>
<dbReference type="SUPFAM" id="SSF82109">
    <property type="entry name" value="MIR domain"/>
    <property type="match status" value="2"/>
</dbReference>
<dbReference type="PROSITE" id="PS50919">
    <property type="entry name" value="MIR"/>
    <property type="match status" value="5"/>
</dbReference>
<name>ITPR3_BOVIN</name>
<gene>
    <name evidence="2" type="primary">ITPR3</name>
</gene>
<keyword id="KW-0067">ATP-binding</keyword>
<keyword id="KW-0106">Calcium</keyword>
<keyword id="KW-0107">Calcium channel</keyword>
<keyword id="KW-0109">Calcium transport</keyword>
<keyword id="KW-0968">Cytoplasmic vesicle</keyword>
<keyword id="KW-1015">Disulfide bond</keyword>
<keyword id="KW-0256">Endoplasmic reticulum</keyword>
<keyword id="KW-0407">Ion channel</keyword>
<keyword id="KW-0406">Ion transport</keyword>
<keyword id="KW-1071">Ligand-gated ion channel</keyword>
<keyword id="KW-0472">Membrane</keyword>
<keyword id="KW-0479">Metal-binding</keyword>
<keyword id="KW-0547">Nucleotide-binding</keyword>
<keyword id="KW-0597">Phosphoprotein</keyword>
<keyword id="KW-0675">Receptor</keyword>
<keyword id="KW-1185">Reference proteome</keyword>
<keyword id="KW-0677">Repeat</keyword>
<keyword id="KW-0812">Transmembrane</keyword>
<keyword id="KW-1133">Transmembrane helix</keyword>
<keyword id="KW-0813">Transport</keyword>
<keyword id="KW-0862">Zinc</keyword>
<sequence length="2664" mass="303040">MSEMSSFLHIGDIVSLYAEGSVNGFISTLGLVDDRCVVEPAAGDLDNPPKKFRDCLFKVCPMNRYSAQKQYWKAKQTKQDKEKIADVVLLQKLQHAAQMEQKQNDTENKKVHGDVVKYGSVIQLLHMKSNKYLTVNKRLPALLEKNAMRVTLDATGNEGSWLFIQPFWKLRSNGDNVVVGDKVILNPVNAGQPLHASNYELSDNAGCKEVNSVNCNTSWKINLFMQFRDHLEEVLKGGDVVRLFHAEQEKFLTCDEYRGKLQVFLRTTLRQSATSATSSNALWEVEVVHHDPCRGGAGHWNGLYRFKHLATGNYLAAEENPSYKGDASDPKAAGTGAQGRTGRRNAGEKIKYRLVAVPHGNDIASLFELDPTTLQKTDSFVPRNSYVRLRHLCTNTWIQSTNVPIDVEEERPIRLMLGTCPTKEDKEAFAIVSVPVSEIRDLDFANDASSMLASAVEKLHEGFISQNDRRFVIQLLEDLVFFVSDVPNNGQNVLDIMVTKPNRERQKLMREQNILKQIFGILKAPFRDKGGEGPLVRLEELSDQKNAPYQHMFRLCYRVLRHSQEDYRKNQEHIAKQFGMMQSQIGYDILAEDTITALLHNNRKLLEKHITKTEVETFVSLVRKNREPRFLDYLSDLCVSNHIAIPVTQELICKCVLDPKNSDILIQTELRPVKEMAQSHEYLSIEYSEEEVWLTWTDKNNEHHEKSVRQLAQEARAGNAHDENVLSYYRYQLKLFARMCLDRQYLAIDEISQQLGVDLIFLCMADEMLPFDLRASFCHLMLHVHVDRDPQELVTPVKFARLWTEIPTAITIKDYDSNLNASRDDKKNKFASTMEFVEDYLNNVVSEAVPFANEEKNKLTFEVVSLAHNLIYFGFYSFSELLRLTRTLLGIIDCVQAYEDPGGKNVRRSTQGVGHMMSTMVLNRKQSVFGGPSLPAGAGAPEPLDGSKFEENEDIVVMETKLKILEILQFILNVRLDYRISYLLSVFKKEFVEVFPMQDSGADGTAPAFDSTTANMNLDRIGEQAEAMFGVGKTSSMLEVDDEGGRMLLRVLIHLTMHDYAPLVSGALQLLFKHFSQRQEVMHTFKQVQLLISAQDVENYKVIKSELDRLRTMVEKSELWVDKKGASKGEEGEAGPAKDKKERPTDEEGFLHPPGEKSSENYQIVKGILERLNKMCGVGEQMRKKQQRLLKNMDAHKVMLDLLQIPYDKGDAKMMEILRYTHQFLQKFCAGNPGNQALLHKHLHLFLTPGLLEAETMQHIFLNNYQLCSEIGEPVLQHFVHLLATHGHHVQYLDFLHTVIKAEGKYVKKCQDMIMTEPANAGDDVVVFYNDKASLAHLLDMMKAARDGVEDHSPLMYHISLVDLLAACAEGKNVYTEIKCTSLLPLEDVVSVVTHEDCITEVKMAYVNFVNHCYVDTEVEMKEIYTSNHIWTLFENFTLDMARVCSKREKRLADPALEKYVLTVVLDTISAFFSSPFSENSTSLQTHQTIVVQLLQSTMRLLECPWLQQQHKGSVEACIRTLAMVAKGRAISLPMDLDAHISSLLSSGASCVAAAQRNASNYKTATRAFPRVMPTANQWDYKNIIEKLQDIITALEERLRPLVQAELSVLVDVLHWPELLFLEGSDAYQRCESGGFLSKLIQHTKDLMESEEKLCVKVLRTLQQMLLKKTKYGDRGNQLRKMLLQNYLQNRKSSSRGDLPDPMGTGLDQDWSAIAATQCRLDKEGATKLVCDLITSTKNEKIFQESIGLAIRLLDGGNTEIQKSFYNLMTSDKKSERFFKVLHDRMKRAQQETKSTVAVNMSDLGSQPREDREQADPTSKGRVASFSMPSSSSRYALGPSLRRGHEVGERVQSNEMGTSVLIMQPILRFLQLLCENHNRDLQNFLRCQNNKTNYNLVCETLQFLDIMCGSTTGGLGLLGLYINEDNVGLVIQTLETLTEYCQGPCHENQTCIVTHESNGIDIITALILNDISPLCKYRMDLVLQLKDNASKLLLALMESRHDSENAERILISLRPQELVDVIKKAYLQEEERENSDVSPREVGHNIYILALQLSRHNKQLQHLLKPVKRIQEEEAEGISSMLSLNNKQLTQMLKSSAPVQEQEEDPLAYYENHTSQIEIVRQDRSMEQIVFPVPGICQFLTEETKHRLFTTTEQDEQGSKVSDLFDQPSFLHNEMEWQRKLRSMPLIYWFSRRMTLWGSISFNLAVFINIIIAFFYPYVEGASTGVLGSPLISLLFWILICFSIAALFTKRYSVRPLIVALILRSIYYLGIGPTLNILGALNLTNKIVFVVSFVGNRGTFIRGYKAMVMDMEFLYHVGYILTSVLGLFAHELFYSILLFDLIYREETLFNVIKSVTRNGRSILLTALLALILVYLFSIVGFLFLKDDFILEVDRLPGNHSRANPLGMPHGAATFVNTCSGDNVDCVSGVSVPEVLAEDEEPDSTERACDTLLMCIVTVMNHGLRNGGGVGDILRKPSKDESLFPARVVYDLLFFFIVIIIVLNLIFGVIIDTFADLRSEKQKKEEILKTTCFICGLERDKFDNKTVSFEEHIKFEHNMWNYLYFIVLVRVKNKTDYTGPESYVAQMIKNKNLDWFPRMRAMSLVSSEGEGEQNEIRILQDKLSATMKLVSHLTAQLSELKEQMTEQRKRRQRLGFVDVQNCMSR</sequence>
<organism>
    <name type="scientific">Bos taurus</name>
    <name type="common">Bovine</name>
    <dbReference type="NCBI Taxonomy" id="9913"/>
    <lineage>
        <taxon>Eukaryota</taxon>
        <taxon>Metazoa</taxon>
        <taxon>Chordata</taxon>
        <taxon>Craniata</taxon>
        <taxon>Vertebrata</taxon>
        <taxon>Euteleostomi</taxon>
        <taxon>Mammalia</taxon>
        <taxon>Eutheria</taxon>
        <taxon>Laurasiatheria</taxon>
        <taxon>Artiodactyla</taxon>
        <taxon>Ruminantia</taxon>
        <taxon>Pecora</taxon>
        <taxon>Bovidae</taxon>
        <taxon>Bovinae</taxon>
        <taxon>Bos</taxon>
    </lineage>
</organism>
<proteinExistence type="evidence at protein level"/>